<gene>
    <name evidence="1" type="primary">tmk</name>
    <name type="ordered locus">Sama_2043</name>
</gene>
<dbReference type="EC" id="2.7.4.9" evidence="1"/>
<dbReference type="EMBL" id="CP000507">
    <property type="protein sequence ID" value="ABM00249.1"/>
    <property type="molecule type" value="Genomic_DNA"/>
</dbReference>
<dbReference type="RefSeq" id="WP_011760156.1">
    <property type="nucleotide sequence ID" value="NC_008700.1"/>
</dbReference>
<dbReference type="SMR" id="A1S792"/>
<dbReference type="STRING" id="326297.Sama_2043"/>
<dbReference type="KEGG" id="saz:Sama_2043"/>
<dbReference type="eggNOG" id="COG0125">
    <property type="taxonomic scope" value="Bacteria"/>
</dbReference>
<dbReference type="HOGENOM" id="CLU_049131_0_1_6"/>
<dbReference type="OrthoDB" id="9774907at2"/>
<dbReference type="Proteomes" id="UP000009175">
    <property type="component" value="Chromosome"/>
</dbReference>
<dbReference type="GO" id="GO:0005829">
    <property type="term" value="C:cytosol"/>
    <property type="evidence" value="ECO:0007669"/>
    <property type="project" value="TreeGrafter"/>
</dbReference>
<dbReference type="GO" id="GO:0005524">
    <property type="term" value="F:ATP binding"/>
    <property type="evidence" value="ECO:0007669"/>
    <property type="project" value="UniProtKB-UniRule"/>
</dbReference>
<dbReference type="GO" id="GO:0004798">
    <property type="term" value="F:dTMP kinase activity"/>
    <property type="evidence" value="ECO:0007669"/>
    <property type="project" value="UniProtKB-UniRule"/>
</dbReference>
<dbReference type="GO" id="GO:0006233">
    <property type="term" value="P:dTDP biosynthetic process"/>
    <property type="evidence" value="ECO:0007669"/>
    <property type="project" value="InterPro"/>
</dbReference>
<dbReference type="GO" id="GO:0006235">
    <property type="term" value="P:dTTP biosynthetic process"/>
    <property type="evidence" value="ECO:0007669"/>
    <property type="project" value="UniProtKB-UniRule"/>
</dbReference>
<dbReference type="GO" id="GO:0006227">
    <property type="term" value="P:dUDP biosynthetic process"/>
    <property type="evidence" value="ECO:0007669"/>
    <property type="project" value="TreeGrafter"/>
</dbReference>
<dbReference type="CDD" id="cd01672">
    <property type="entry name" value="TMPK"/>
    <property type="match status" value="1"/>
</dbReference>
<dbReference type="FunFam" id="3.40.50.300:FF:000321">
    <property type="entry name" value="Thymidylate kinase"/>
    <property type="match status" value="1"/>
</dbReference>
<dbReference type="Gene3D" id="3.40.50.300">
    <property type="entry name" value="P-loop containing nucleotide triphosphate hydrolases"/>
    <property type="match status" value="1"/>
</dbReference>
<dbReference type="HAMAP" id="MF_00165">
    <property type="entry name" value="Thymidylate_kinase"/>
    <property type="match status" value="1"/>
</dbReference>
<dbReference type="InterPro" id="IPR027417">
    <property type="entry name" value="P-loop_NTPase"/>
</dbReference>
<dbReference type="InterPro" id="IPR039430">
    <property type="entry name" value="Thymidylate_kin-like_dom"/>
</dbReference>
<dbReference type="InterPro" id="IPR018095">
    <property type="entry name" value="Thymidylate_kin_CS"/>
</dbReference>
<dbReference type="InterPro" id="IPR018094">
    <property type="entry name" value="Thymidylate_kinase"/>
</dbReference>
<dbReference type="NCBIfam" id="TIGR00041">
    <property type="entry name" value="DTMP_kinase"/>
    <property type="match status" value="1"/>
</dbReference>
<dbReference type="PANTHER" id="PTHR10344">
    <property type="entry name" value="THYMIDYLATE KINASE"/>
    <property type="match status" value="1"/>
</dbReference>
<dbReference type="PANTHER" id="PTHR10344:SF4">
    <property type="entry name" value="UMP-CMP KINASE 2, MITOCHONDRIAL"/>
    <property type="match status" value="1"/>
</dbReference>
<dbReference type="Pfam" id="PF02223">
    <property type="entry name" value="Thymidylate_kin"/>
    <property type="match status" value="1"/>
</dbReference>
<dbReference type="SUPFAM" id="SSF52540">
    <property type="entry name" value="P-loop containing nucleoside triphosphate hydrolases"/>
    <property type="match status" value="1"/>
</dbReference>
<dbReference type="PROSITE" id="PS01331">
    <property type="entry name" value="THYMIDYLATE_KINASE"/>
    <property type="match status" value="1"/>
</dbReference>
<protein>
    <recommendedName>
        <fullName evidence="1">Thymidylate kinase</fullName>
        <ecNumber evidence="1">2.7.4.9</ecNumber>
    </recommendedName>
    <alternativeName>
        <fullName evidence="1">dTMP kinase</fullName>
    </alternativeName>
</protein>
<reference key="1">
    <citation type="submission" date="2006-12" db="EMBL/GenBank/DDBJ databases">
        <title>Complete sequence of Shewanella amazonensis SB2B.</title>
        <authorList>
            <consortium name="US DOE Joint Genome Institute"/>
            <person name="Copeland A."/>
            <person name="Lucas S."/>
            <person name="Lapidus A."/>
            <person name="Barry K."/>
            <person name="Detter J.C."/>
            <person name="Glavina del Rio T."/>
            <person name="Hammon N."/>
            <person name="Israni S."/>
            <person name="Dalin E."/>
            <person name="Tice H."/>
            <person name="Pitluck S."/>
            <person name="Munk A.C."/>
            <person name="Brettin T."/>
            <person name="Bruce D."/>
            <person name="Han C."/>
            <person name="Tapia R."/>
            <person name="Gilna P."/>
            <person name="Schmutz J."/>
            <person name="Larimer F."/>
            <person name="Land M."/>
            <person name="Hauser L."/>
            <person name="Kyrpides N."/>
            <person name="Mikhailova N."/>
            <person name="Fredrickson J."/>
            <person name="Richardson P."/>
        </authorList>
    </citation>
    <scope>NUCLEOTIDE SEQUENCE [LARGE SCALE GENOMIC DNA]</scope>
    <source>
        <strain>ATCC BAA-1098 / SB2B</strain>
    </source>
</reference>
<feature type="chain" id="PRO_1000023275" description="Thymidylate kinase">
    <location>
        <begin position="1"/>
        <end position="208"/>
    </location>
</feature>
<feature type="binding site" evidence="1">
    <location>
        <begin position="13"/>
        <end position="20"/>
    </location>
    <ligand>
        <name>ATP</name>
        <dbReference type="ChEBI" id="CHEBI:30616"/>
    </ligand>
</feature>
<accession>A1S792</accession>
<comment type="function">
    <text evidence="1">Phosphorylation of dTMP to form dTDP in both de novo and salvage pathways of dTTP synthesis.</text>
</comment>
<comment type="catalytic activity">
    <reaction evidence="1">
        <text>dTMP + ATP = dTDP + ADP</text>
        <dbReference type="Rhea" id="RHEA:13517"/>
        <dbReference type="ChEBI" id="CHEBI:30616"/>
        <dbReference type="ChEBI" id="CHEBI:58369"/>
        <dbReference type="ChEBI" id="CHEBI:63528"/>
        <dbReference type="ChEBI" id="CHEBI:456216"/>
        <dbReference type="EC" id="2.7.4.9"/>
    </reaction>
</comment>
<comment type="similarity">
    <text evidence="1">Belongs to the thymidylate kinase family.</text>
</comment>
<organism>
    <name type="scientific">Shewanella amazonensis (strain ATCC BAA-1098 / SB2B)</name>
    <dbReference type="NCBI Taxonomy" id="326297"/>
    <lineage>
        <taxon>Bacteria</taxon>
        <taxon>Pseudomonadati</taxon>
        <taxon>Pseudomonadota</taxon>
        <taxon>Gammaproteobacteria</taxon>
        <taxon>Alteromonadales</taxon>
        <taxon>Shewanellaceae</taxon>
        <taxon>Shewanella</taxon>
    </lineage>
</organism>
<proteinExistence type="inferred from homology"/>
<name>KTHY_SHEAM</name>
<evidence type="ECO:0000255" key="1">
    <source>
        <dbReference type="HAMAP-Rule" id="MF_00165"/>
    </source>
</evidence>
<keyword id="KW-0067">ATP-binding</keyword>
<keyword id="KW-0418">Kinase</keyword>
<keyword id="KW-0545">Nucleotide biosynthesis</keyword>
<keyword id="KW-0547">Nucleotide-binding</keyword>
<keyword id="KW-1185">Reference proteome</keyword>
<keyword id="KW-0808">Transferase</keyword>
<sequence>MTQNPGKFIVIEGLEGAGKSSAITLVHDFIEKHTGMAPVCTREPGGTPLAEKIRDLVKNAEPGDPLCDEAECLLFYAARAQLVANVIKPSLASGRWVLGDRHNLSSIAYQGGGRGLMSLVKTISDATLGGFKPDLTLYLDIDPLLGLERAARRGALDRIEQQEIDFFHRARATFLAQARDDSSIVVIDASKPLNEVHKDILACLSTAL</sequence>